<comment type="function">
    <text evidence="1">Probably functions as a manganese efflux pump.</text>
</comment>
<comment type="subcellular location">
    <subcellularLocation>
        <location evidence="1">Cell inner membrane</location>
        <topology evidence="1">Multi-pass membrane protein</topology>
    </subcellularLocation>
</comment>
<comment type="similarity">
    <text evidence="1">Belongs to the MntP (TC 9.B.29) family.</text>
</comment>
<sequence length="188" mass="20049">MHFTATVLLAFGMSMDAFAASIGKGATLHKPKFSEALRTGLIFGAVETLTPLIGWGLGILASKFVLEWNHWIAFVLLIFLGGRMIIEGIRGGSDEDETPLRRHSFWLLVTTAIATSLDAMAVGVGLAFLQVNIIATALAIGCATLIMSTLGMMIGRFIGPMLGKRAEILGGVVLIGIGVQILWTHFHG</sequence>
<keyword id="KW-0997">Cell inner membrane</keyword>
<keyword id="KW-1003">Cell membrane</keyword>
<keyword id="KW-0406">Ion transport</keyword>
<keyword id="KW-0464">Manganese</keyword>
<keyword id="KW-0472">Membrane</keyword>
<keyword id="KW-0812">Transmembrane</keyword>
<keyword id="KW-1133">Transmembrane helix</keyword>
<keyword id="KW-0813">Transport</keyword>
<evidence type="ECO:0000255" key="1">
    <source>
        <dbReference type="HAMAP-Rule" id="MF_01521"/>
    </source>
</evidence>
<dbReference type="EMBL" id="CP001138">
    <property type="protein sequence ID" value="ACH52361.1"/>
    <property type="molecule type" value="Genomic_DNA"/>
</dbReference>
<dbReference type="RefSeq" id="WP_001518359.1">
    <property type="nucleotide sequence ID" value="NC_011149.1"/>
</dbReference>
<dbReference type="KEGG" id="sea:SeAg_B1297"/>
<dbReference type="HOGENOM" id="CLU_096410_0_0_6"/>
<dbReference type="Proteomes" id="UP000008819">
    <property type="component" value="Chromosome"/>
</dbReference>
<dbReference type="GO" id="GO:0005886">
    <property type="term" value="C:plasma membrane"/>
    <property type="evidence" value="ECO:0007669"/>
    <property type="project" value="UniProtKB-SubCell"/>
</dbReference>
<dbReference type="GO" id="GO:0005384">
    <property type="term" value="F:manganese ion transmembrane transporter activity"/>
    <property type="evidence" value="ECO:0007669"/>
    <property type="project" value="UniProtKB-UniRule"/>
</dbReference>
<dbReference type="HAMAP" id="MF_01521">
    <property type="entry name" value="MntP_pump"/>
    <property type="match status" value="1"/>
</dbReference>
<dbReference type="InterPro" id="IPR003810">
    <property type="entry name" value="Mntp/YtaF"/>
</dbReference>
<dbReference type="InterPro" id="IPR022929">
    <property type="entry name" value="Put_MntP"/>
</dbReference>
<dbReference type="NCBIfam" id="NF008546">
    <property type="entry name" value="PRK11469.1"/>
    <property type="match status" value="1"/>
</dbReference>
<dbReference type="PANTHER" id="PTHR35529">
    <property type="entry name" value="MANGANESE EFFLUX PUMP MNTP-RELATED"/>
    <property type="match status" value="1"/>
</dbReference>
<dbReference type="PANTHER" id="PTHR35529:SF1">
    <property type="entry name" value="MANGANESE EFFLUX PUMP MNTP-RELATED"/>
    <property type="match status" value="1"/>
</dbReference>
<dbReference type="Pfam" id="PF02659">
    <property type="entry name" value="Mntp"/>
    <property type="match status" value="1"/>
</dbReference>
<proteinExistence type="inferred from homology"/>
<gene>
    <name evidence="1" type="primary">mntP</name>
    <name type="synonym">yebN</name>
    <name type="ordered locus">SeAg_B1297</name>
</gene>
<accession>B5F3Q8</accession>
<organism>
    <name type="scientific">Salmonella agona (strain SL483)</name>
    <dbReference type="NCBI Taxonomy" id="454166"/>
    <lineage>
        <taxon>Bacteria</taxon>
        <taxon>Pseudomonadati</taxon>
        <taxon>Pseudomonadota</taxon>
        <taxon>Gammaproteobacteria</taxon>
        <taxon>Enterobacterales</taxon>
        <taxon>Enterobacteriaceae</taxon>
        <taxon>Salmonella</taxon>
    </lineage>
</organism>
<reference key="1">
    <citation type="journal article" date="2011" name="J. Bacteriol.">
        <title>Comparative genomics of 28 Salmonella enterica isolates: evidence for CRISPR-mediated adaptive sublineage evolution.</title>
        <authorList>
            <person name="Fricke W.F."/>
            <person name="Mammel M.K."/>
            <person name="McDermott P.F."/>
            <person name="Tartera C."/>
            <person name="White D.G."/>
            <person name="Leclerc J.E."/>
            <person name="Ravel J."/>
            <person name="Cebula T.A."/>
        </authorList>
    </citation>
    <scope>NUCLEOTIDE SEQUENCE [LARGE SCALE GENOMIC DNA]</scope>
    <source>
        <strain>SL483</strain>
    </source>
</reference>
<feature type="chain" id="PRO_1000200037" description="Probable manganese efflux pump MntP">
    <location>
        <begin position="1"/>
        <end position="188"/>
    </location>
</feature>
<feature type="transmembrane region" description="Helical" evidence="1">
    <location>
        <begin position="3"/>
        <end position="23"/>
    </location>
</feature>
<feature type="transmembrane region" description="Helical" evidence="1">
    <location>
        <begin position="41"/>
        <end position="61"/>
    </location>
</feature>
<feature type="transmembrane region" description="Helical" evidence="1">
    <location>
        <begin position="66"/>
        <end position="86"/>
    </location>
</feature>
<feature type="transmembrane region" description="Helical" evidence="1">
    <location>
        <begin position="106"/>
        <end position="128"/>
    </location>
</feature>
<feature type="transmembrane region" description="Helical" evidence="1">
    <location>
        <begin position="143"/>
        <end position="163"/>
    </location>
</feature>
<feature type="transmembrane region" description="Helical" evidence="1">
    <location>
        <begin position="168"/>
        <end position="188"/>
    </location>
</feature>
<protein>
    <recommendedName>
        <fullName evidence="1">Probable manganese efflux pump MntP</fullName>
    </recommendedName>
</protein>
<name>MNTP_SALA4</name>